<dbReference type="EMBL" id="CP000096">
    <property type="protein sequence ID" value="ABB24613.1"/>
    <property type="molecule type" value="Genomic_DNA"/>
</dbReference>
<dbReference type="RefSeq" id="WP_011358485.1">
    <property type="nucleotide sequence ID" value="NC_007512.1"/>
</dbReference>
<dbReference type="SMR" id="Q3B218"/>
<dbReference type="STRING" id="319225.Plut_1759"/>
<dbReference type="KEGG" id="plt:Plut_1759"/>
<dbReference type="eggNOG" id="COG0268">
    <property type="taxonomic scope" value="Bacteria"/>
</dbReference>
<dbReference type="HOGENOM" id="CLU_160655_3_1_10"/>
<dbReference type="OrthoDB" id="9808392at2"/>
<dbReference type="Proteomes" id="UP000002709">
    <property type="component" value="Chromosome"/>
</dbReference>
<dbReference type="GO" id="GO:0005829">
    <property type="term" value="C:cytosol"/>
    <property type="evidence" value="ECO:0007669"/>
    <property type="project" value="TreeGrafter"/>
</dbReference>
<dbReference type="GO" id="GO:0015935">
    <property type="term" value="C:small ribosomal subunit"/>
    <property type="evidence" value="ECO:0007669"/>
    <property type="project" value="TreeGrafter"/>
</dbReference>
<dbReference type="GO" id="GO:0070181">
    <property type="term" value="F:small ribosomal subunit rRNA binding"/>
    <property type="evidence" value="ECO:0007669"/>
    <property type="project" value="TreeGrafter"/>
</dbReference>
<dbReference type="GO" id="GO:0003735">
    <property type="term" value="F:structural constituent of ribosome"/>
    <property type="evidence" value="ECO:0007669"/>
    <property type="project" value="InterPro"/>
</dbReference>
<dbReference type="GO" id="GO:0006412">
    <property type="term" value="P:translation"/>
    <property type="evidence" value="ECO:0007669"/>
    <property type="project" value="UniProtKB-UniRule"/>
</dbReference>
<dbReference type="Gene3D" id="1.20.58.110">
    <property type="entry name" value="Ribosomal protein S20"/>
    <property type="match status" value="1"/>
</dbReference>
<dbReference type="HAMAP" id="MF_00500">
    <property type="entry name" value="Ribosomal_bS20"/>
    <property type="match status" value="1"/>
</dbReference>
<dbReference type="InterPro" id="IPR002583">
    <property type="entry name" value="Ribosomal_bS20"/>
</dbReference>
<dbReference type="InterPro" id="IPR036510">
    <property type="entry name" value="Ribosomal_bS20_sf"/>
</dbReference>
<dbReference type="NCBIfam" id="TIGR00029">
    <property type="entry name" value="S20"/>
    <property type="match status" value="1"/>
</dbReference>
<dbReference type="PANTHER" id="PTHR33398">
    <property type="entry name" value="30S RIBOSOMAL PROTEIN S20"/>
    <property type="match status" value="1"/>
</dbReference>
<dbReference type="PANTHER" id="PTHR33398:SF1">
    <property type="entry name" value="SMALL RIBOSOMAL SUBUNIT PROTEIN BS20C"/>
    <property type="match status" value="1"/>
</dbReference>
<dbReference type="Pfam" id="PF01649">
    <property type="entry name" value="Ribosomal_S20p"/>
    <property type="match status" value="1"/>
</dbReference>
<dbReference type="SUPFAM" id="SSF46992">
    <property type="entry name" value="Ribosomal protein S20"/>
    <property type="match status" value="1"/>
</dbReference>
<sequence length="91" mass="10581">MPLHKSAEKRLRQSERRNARNRARKKELKTLIKNMQKLIEARAAKSEVESAYRSAVQKLDRLGVKSYIHANKASRKKSQLTRLFNGYAEAE</sequence>
<comment type="function">
    <text evidence="1">Binds directly to 16S ribosomal RNA.</text>
</comment>
<comment type="similarity">
    <text evidence="1">Belongs to the bacterial ribosomal protein bS20 family.</text>
</comment>
<proteinExistence type="inferred from homology"/>
<evidence type="ECO:0000255" key="1">
    <source>
        <dbReference type="HAMAP-Rule" id="MF_00500"/>
    </source>
</evidence>
<evidence type="ECO:0000256" key="2">
    <source>
        <dbReference type="SAM" id="MobiDB-lite"/>
    </source>
</evidence>
<evidence type="ECO:0000305" key="3"/>
<organism>
    <name type="scientific">Chlorobium luteolum (strain DSM 273 / BCRC 81028 / 2530)</name>
    <name type="common">Pelodictyon luteolum</name>
    <dbReference type="NCBI Taxonomy" id="319225"/>
    <lineage>
        <taxon>Bacteria</taxon>
        <taxon>Pseudomonadati</taxon>
        <taxon>Chlorobiota</taxon>
        <taxon>Chlorobiia</taxon>
        <taxon>Chlorobiales</taxon>
        <taxon>Chlorobiaceae</taxon>
        <taxon>Chlorobium/Pelodictyon group</taxon>
        <taxon>Pelodictyon</taxon>
    </lineage>
</organism>
<name>RS20_CHLL3</name>
<reference key="1">
    <citation type="submission" date="2005-08" db="EMBL/GenBank/DDBJ databases">
        <title>Complete sequence of Pelodictyon luteolum DSM 273.</title>
        <authorList>
            <consortium name="US DOE Joint Genome Institute"/>
            <person name="Copeland A."/>
            <person name="Lucas S."/>
            <person name="Lapidus A."/>
            <person name="Barry K."/>
            <person name="Detter J.C."/>
            <person name="Glavina T."/>
            <person name="Hammon N."/>
            <person name="Israni S."/>
            <person name="Pitluck S."/>
            <person name="Bryant D."/>
            <person name="Schmutz J."/>
            <person name="Larimer F."/>
            <person name="Land M."/>
            <person name="Kyrpides N."/>
            <person name="Ivanova N."/>
            <person name="Richardson P."/>
        </authorList>
    </citation>
    <scope>NUCLEOTIDE SEQUENCE [LARGE SCALE GENOMIC DNA]</scope>
    <source>
        <strain>DSM 273 / BCRC 81028 / 2530</strain>
    </source>
</reference>
<keyword id="KW-1185">Reference proteome</keyword>
<keyword id="KW-0687">Ribonucleoprotein</keyword>
<keyword id="KW-0689">Ribosomal protein</keyword>
<keyword id="KW-0694">RNA-binding</keyword>
<keyword id="KW-0699">rRNA-binding</keyword>
<protein>
    <recommendedName>
        <fullName evidence="1">Small ribosomal subunit protein bS20</fullName>
    </recommendedName>
    <alternativeName>
        <fullName evidence="3">30S ribosomal protein S20</fullName>
    </alternativeName>
</protein>
<feature type="chain" id="PRO_0000236446" description="Small ribosomal subunit protein bS20">
    <location>
        <begin position="1"/>
        <end position="91"/>
    </location>
</feature>
<feature type="region of interest" description="Disordered" evidence="2">
    <location>
        <begin position="1"/>
        <end position="25"/>
    </location>
</feature>
<feature type="compositionally biased region" description="Basic and acidic residues" evidence="2">
    <location>
        <begin position="1"/>
        <end position="18"/>
    </location>
</feature>
<accession>Q3B218</accession>
<gene>
    <name evidence="1" type="primary">rpsT</name>
    <name type="ordered locus">Plut_1759</name>
</gene>